<accession>B6VJS4</accession>
<accession>F6H518</accession>
<evidence type="ECO:0000255" key="1">
    <source>
        <dbReference type="PROSITE-ProRule" id="PRU01020"/>
    </source>
</evidence>
<evidence type="ECO:0000269" key="2">
    <source>
    </source>
</evidence>
<evidence type="ECO:0000305" key="3"/>
<gene>
    <name type="primary">ROMT</name>
    <name type="ordered locus">VIT_12s0028g01880</name>
</gene>
<proteinExistence type="evidence at protein level"/>
<feature type="chain" id="PRO_0000418736" description="Trans-resveratrol di-O-methyltransferase">
    <location>
        <begin position="1"/>
        <end position="357"/>
    </location>
</feature>
<feature type="active site" description="Proton acceptor" evidence="1">
    <location>
        <position position="261"/>
    </location>
</feature>
<feature type="binding site" evidence="1">
    <location>
        <position position="200"/>
    </location>
    <ligand>
        <name>S-adenosyl-L-methionine</name>
        <dbReference type="ChEBI" id="CHEBI:59789"/>
    </ligand>
</feature>
<feature type="binding site" evidence="1">
    <location>
        <position position="223"/>
    </location>
    <ligand>
        <name>S-adenosyl-L-methionine</name>
        <dbReference type="ChEBI" id="CHEBI:59789"/>
    </ligand>
</feature>
<feature type="binding site" evidence="1">
    <location>
        <position position="243"/>
    </location>
    <ligand>
        <name>S-adenosyl-L-methionine</name>
        <dbReference type="ChEBI" id="CHEBI:59789"/>
    </ligand>
</feature>
<feature type="binding site" evidence="1">
    <location>
        <position position="244"/>
    </location>
    <ligand>
        <name>S-adenosyl-L-methionine</name>
        <dbReference type="ChEBI" id="CHEBI:59789"/>
    </ligand>
</feature>
<feature type="binding site" evidence="1">
    <location>
        <position position="257"/>
    </location>
    <ligand>
        <name>S-adenosyl-L-methionine</name>
        <dbReference type="ChEBI" id="CHEBI:59789"/>
    </ligand>
</feature>
<feature type="sequence conflict" description="In Ref. 1; CAQ76879." evidence="3" ref="1">
    <original>Y</original>
    <variation>H</variation>
    <location>
        <position position="149"/>
    </location>
</feature>
<feature type="sequence conflict" description="In Ref. 1; CAQ76879." evidence="3" ref="1">
    <original>S</original>
    <variation>P</variation>
    <location>
        <position position="225"/>
    </location>
</feature>
<feature type="sequence conflict" description="In Ref. 1; CAQ76879." evidence="3" ref="1">
    <original>N</original>
    <variation>D</variation>
    <location>
        <position position="265"/>
    </location>
</feature>
<sequence length="357" mass="40100">MDLANGVISAELLHAQAHVWNHIFNFIKSMSLKCAIQLGIPDIIHNHGKPMTLPELVAKLPVHPKRSQCVYRLMRILVHSGFLAAQRVQQGKEEEGYVLTDASRLLLMDDSLSIRPLVLAMLDPILTKPWHYLSAWFQNDDPTPFHTAYERSFWDYAGHEPQLNNSFNEAMASDARLLTSVLLKEGQGVFAGLNSLVDVGGGTGKVAKAIANAFPHLNCTVLDLSHVVAGLQGSKNLNYFAGDMFEAIPPADAILLKWILHDWSNEECVKILKRCREAIPSKENGGKVIIIDMIMMKNQGDYKSTETQLFFDMTMMIFAPGRERDENEWEKLFLDAGFSHYKITPILGLRSLIEVYP</sequence>
<organism>
    <name type="scientific">Vitis vinifera</name>
    <name type="common">Grape</name>
    <dbReference type="NCBI Taxonomy" id="29760"/>
    <lineage>
        <taxon>Eukaryota</taxon>
        <taxon>Viridiplantae</taxon>
        <taxon>Streptophyta</taxon>
        <taxon>Embryophyta</taxon>
        <taxon>Tracheophyta</taxon>
        <taxon>Spermatophyta</taxon>
        <taxon>Magnoliopsida</taxon>
        <taxon>eudicotyledons</taxon>
        <taxon>Gunneridae</taxon>
        <taxon>Pentapetalae</taxon>
        <taxon>rosids</taxon>
        <taxon>Vitales</taxon>
        <taxon>Vitaceae</taxon>
        <taxon>Viteae</taxon>
        <taxon>Vitis</taxon>
    </lineage>
</organism>
<protein>
    <recommendedName>
        <fullName>Trans-resveratrol di-O-methyltransferase</fullName>
        <ecNumber>2.1.1.240</ecNumber>
    </recommendedName>
    <alternativeName>
        <fullName>Resveratrol O-methyltransferase</fullName>
        <shortName>ROMT</shortName>
        <shortName>VvROMT</shortName>
    </alternativeName>
</protein>
<comment type="function">
    <text evidence="2">Catalyzes the biosynthesis of pterostilbene from resveratrol. Pterostilbene has both antifungal and pharmacological properties. Also has activity toward resveratrol monomethyl ether (RME).</text>
</comment>
<comment type="catalytic activity">
    <reaction evidence="2">
        <text>trans-resveratrol + 2 S-adenosyl-L-methionine = pterostilbene + 2 S-adenosyl-L-homocysteine + 2 H(+)</text>
        <dbReference type="Rhea" id="RHEA:32103"/>
        <dbReference type="ChEBI" id="CHEBI:8630"/>
        <dbReference type="ChEBI" id="CHEBI:15378"/>
        <dbReference type="ChEBI" id="CHEBI:45713"/>
        <dbReference type="ChEBI" id="CHEBI:57856"/>
        <dbReference type="ChEBI" id="CHEBI:59789"/>
        <dbReference type="EC" id="2.1.1.240"/>
    </reaction>
</comment>
<comment type="biophysicochemical properties">
    <kinetics>
        <KM evidence="2">12 uM for resveratrol</KM>
        <KM evidence="2">14 uM for resveratrol monomethyl ether</KM>
    </kinetics>
</comment>
<comment type="induction">
    <text evidence="2">Expression in leaves is induced by different stresses, such as downy mildew (P.viticola) infection, ultraviolet light, and AlCl(3) treatment.</text>
</comment>
<comment type="similarity">
    <text evidence="1">Belongs to the class I-like SAM-binding methyltransferase superfamily. Cation-independent O-methyltransferase family. COMT subfamily.</text>
</comment>
<keyword id="KW-0489">Methyltransferase</keyword>
<keyword id="KW-1185">Reference proteome</keyword>
<keyword id="KW-0949">S-adenosyl-L-methionine</keyword>
<keyword id="KW-0808">Transferase</keyword>
<dbReference type="EC" id="2.1.1.240"/>
<dbReference type="EMBL" id="FM178870">
    <property type="protein sequence ID" value="CAQ76879.1"/>
    <property type="molecule type" value="mRNA"/>
</dbReference>
<dbReference type="EMBL" id="FN595235">
    <property type="protein sequence ID" value="CCB47386.1"/>
    <property type="molecule type" value="Genomic_DNA"/>
</dbReference>
<dbReference type="EMBL" id="FN597034">
    <property type="status" value="NOT_ANNOTATED_CDS"/>
    <property type="molecule type" value="Genomic_DNA"/>
</dbReference>
<dbReference type="SMR" id="B6VJS4"/>
<dbReference type="STRING" id="29760.B6VJS4"/>
<dbReference type="PaxDb" id="29760-VIT_12s0028g01880.t01"/>
<dbReference type="EnsemblPlants" id="Vitvi12g02241_t001">
    <property type="protein sequence ID" value="Vitvi12g02241_P001"/>
    <property type="gene ID" value="Vitvi12g02241"/>
</dbReference>
<dbReference type="Gramene" id="Vitvi12g02241_t001">
    <property type="protein sequence ID" value="Vitvi12g02241_P001"/>
    <property type="gene ID" value="Vitvi12g02241"/>
</dbReference>
<dbReference type="eggNOG" id="KOG3178">
    <property type="taxonomic scope" value="Eukaryota"/>
</dbReference>
<dbReference type="HOGENOM" id="CLU_005533_7_0_1"/>
<dbReference type="InParanoid" id="B6VJS4"/>
<dbReference type="OrthoDB" id="2410195at2759"/>
<dbReference type="BioCyc" id="MetaCyc:MONOMER-16020"/>
<dbReference type="BRENDA" id="2.1.1.240">
    <property type="organism ID" value="6671"/>
</dbReference>
<dbReference type="SABIO-RK" id="B6VJS4"/>
<dbReference type="Proteomes" id="UP000009183">
    <property type="component" value="Chromosome 12"/>
</dbReference>
<dbReference type="ExpressionAtlas" id="B6VJS4">
    <property type="expression patterns" value="baseline and differential"/>
</dbReference>
<dbReference type="GO" id="GO:0008171">
    <property type="term" value="F:O-methyltransferase activity"/>
    <property type="evidence" value="ECO:0000318"/>
    <property type="project" value="GO_Central"/>
</dbReference>
<dbReference type="GO" id="GO:0046983">
    <property type="term" value="F:protein dimerization activity"/>
    <property type="evidence" value="ECO:0007669"/>
    <property type="project" value="InterPro"/>
</dbReference>
<dbReference type="GO" id="GO:0102303">
    <property type="term" value="F:resveratrol 3,5-O-dimethyltransferase activity"/>
    <property type="evidence" value="ECO:0007669"/>
    <property type="project" value="UniProtKB-EC"/>
</dbReference>
<dbReference type="GO" id="GO:0008757">
    <property type="term" value="F:S-adenosylmethionine-dependent methyltransferase activity"/>
    <property type="evidence" value="ECO:0000318"/>
    <property type="project" value="GO_Central"/>
</dbReference>
<dbReference type="GO" id="GO:0009058">
    <property type="term" value="P:biosynthetic process"/>
    <property type="evidence" value="ECO:0000318"/>
    <property type="project" value="GO_Central"/>
</dbReference>
<dbReference type="GO" id="GO:0032259">
    <property type="term" value="P:methylation"/>
    <property type="evidence" value="ECO:0000318"/>
    <property type="project" value="GO_Central"/>
</dbReference>
<dbReference type="CDD" id="cd02440">
    <property type="entry name" value="AdoMet_MTases"/>
    <property type="match status" value="1"/>
</dbReference>
<dbReference type="FunFam" id="1.10.10.10:FF:000213">
    <property type="entry name" value="Coniferyl alcohol 9-O-methyltransferase"/>
    <property type="match status" value="1"/>
</dbReference>
<dbReference type="FunFam" id="3.40.50.150:FF:000057">
    <property type="entry name" value="O-methyltransferase ZRP4"/>
    <property type="match status" value="1"/>
</dbReference>
<dbReference type="Gene3D" id="3.40.50.150">
    <property type="entry name" value="Vaccinia Virus protein VP39"/>
    <property type="match status" value="1"/>
</dbReference>
<dbReference type="Gene3D" id="1.10.10.10">
    <property type="entry name" value="Winged helix-like DNA-binding domain superfamily/Winged helix DNA-binding domain"/>
    <property type="match status" value="1"/>
</dbReference>
<dbReference type="InterPro" id="IPR016461">
    <property type="entry name" value="COMT-like"/>
</dbReference>
<dbReference type="InterPro" id="IPR001077">
    <property type="entry name" value="O_MeTrfase_dom"/>
</dbReference>
<dbReference type="InterPro" id="IPR012967">
    <property type="entry name" value="Plant_O-MeTrfase_dimerisation"/>
</dbReference>
<dbReference type="InterPro" id="IPR029063">
    <property type="entry name" value="SAM-dependent_MTases_sf"/>
</dbReference>
<dbReference type="InterPro" id="IPR036388">
    <property type="entry name" value="WH-like_DNA-bd_sf"/>
</dbReference>
<dbReference type="InterPro" id="IPR036390">
    <property type="entry name" value="WH_DNA-bd_sf"/>
</dbReference>
<dbReference type="PANTHER" id="PTHR11746">
    <property type="entry name" value="O-METHYLTRANSFERASE"/>
    <property type="match status" value="1"/>
</dbReference>
<dbReference type="Pfam" id="PF08100">
    <property type="entry name" value="Dimerisation"/>
    <property type="match status" value="1"/>
</dbReference>
<dbReference type="Pfam" id="PF00891">
    <property type="entry name" value="Methyltransf_2"/>
    <property type="match status" value="1"/>
</dbReference>
<dbReference type="PIRSF" id="PIRSF005739">
    <property type="entry name" value="O-mtase"/>
    <property type="match status" value="1"/>
</dbReference>
<dbReference type="SUPFAM" id="SSF53335">
    <property type="entry name" value="S-adenosyl-L-methionine-dependent methyltransferases"/>
    <property type="match status" value="1"/>
</dbReference>
<dbReference type="SUPFAM" id="SSF46785">
    <property type="entry name" value="Winged helix' DNA-binding domain"/>
    <property type="match status" value="1"/>
</dbReference>
<dbReference type="PROSITE" id="PS51683">
    <property type="entry name" value="SAM_OMT_II"/>
    <property type="match status" value="1"/>
</dbReference>
<reference key="1">
    <citation type="journal article" date="2008" name="Plant Physiol.">
        <title>A stress-inducible resveratrol O-methyltransferase involved in the biosynthesis of pterostilbene in grapevine.</title>
        <authorList>
            <person name="Schmidlin L."/>
            <person name="Poutaraud A."/>
            <person name="Claudel P."/>
            <person name="Mestre P."/>
            <person name="Prado E."/>
            <person name="Santos-Rosa M."/>
            <person name="Wiedemann-Merdinoglu S."/>
            <person name="Karst F."/>
            <person name="Merdinoglu D."/>
            <person name="Hugueney P."/>
        </authorList>
    </citation>
    <scope>NUCLEOTIDE SEQUENCE [MRNA]</scope>
    <scope>FUNCTION</scope>
    <scope>CATALYTIC ACTIVITY</scope>
    <scope>BIOPHYSICOCHEMICAL PROPERTIES</scope>
    <scope>INDUCTION</scope>
    <source>
        <strain>cv. Cabernet Sauvignon</strain>
        <tissue>Leaf</tissue>
    </source>
</reference>
<reference key="2">
    <citation type="journal article" date="2007" name="Nature">
        <title>The grapevine genome sequence suggests ancestral hexaploidization in major angiosperm phyla.</title>
        <authorList>
            <person name="Jaillon O."/>
            <person name="Aury J.-M."/>
            <person name="Noel B."/>
            <person name="Policriti A."/>
            <person name="Clepet C."/>
            <person name="Casagrande A."/>
            <person name="Choisne N."/>
            <person name="Aubourg S."/>
            <person name="Vitulo N."/>
            <person name="Jubin C."/>
            <person name="Vezzi A."/>
            <person name="Legeai F."/>
            <person name="Hugueney P."/>
            <person name="Dasilva C."/>
            <person name="Horner D."/>
            <person name="Mica E."/>
            <person name="Jublot D."/>
            <person name="Poulain J."/>
            <person name="Bruyere C."/>
            <person name="Billault A."/>
            <person name="Segurens B."/>
            <person name="Gouyvenoux M."/>
            <person name="Ugarte E."/>
            <person name="Cattonaro F."/>
            <person name="Anthouard V."/>
            <person name="Vico V."/>
            <person name="Del Fabbro C."/>
            <person name="Alaux M."/>
            <person name="Di Gaspero G."/>
            <person name="Dumas V."/>
            <person name="Felice N."/>
            <person name="Paillard S."/>
            <person name="Juman I."/>
            <person name="Moroldo M."/>
            <person name="Scalabrin S."/>
            <person name="Canaguier A."/>
            <person name="Le Clainche I."/>
            <person name="Malacrida G."/>
            <person name="Durand E."/>
            <person name="Pesole G."/>
            <person name="Laucou V."/>
            <person name="Chatelet P."/>
            <person name="Merdinoglu D."/>
            <person name="Delledonne M."/>
            <person name="Pezzotti M."/>
            <person name="Lecharny A."/>
            <person name="Scarpelli C."/>
            <person name="Artiguenave F."/>
            <person name="Pe M.E."/>
            <person name="Valle G."/>
            <person name="Morgante M."/>
            <person name="Caboche M."/>
            <person name="Adam-Blondon A.-F."/>
            <person name="Weissenbach J."/>
            <person name="Quetier F."/>
            <person name="Wincker P."/>
        </authorList>
    </citation>
    <scope>NUCLEOTIDE SEQUENCE [LARGE SCALE GENOMIC DNA]</scope>
    <source>
        <strain>cv. Pinot noir / PN40024</strain>
    </source>
</reference>
<name>ROMT_VITVI</name>